<evidence type="ECO:0000255" key="1">
    <source>
        <dbReference type="HAMAP-Rule" id="MF_00083"/>
    </source>
</evidence>
<keyword id="KW-0963">Cytoplasm</keyword>
<keyword id="KW-0378">Hydrolase</keyword>
<keyword id="KW-0694">RNA-binding</keyword>
<keyword id="KW-0820">tRNA-binding</keyword>
<gene>
    <name evidence="1" type="primary">pth</name>
    <name type="ordered locus">Sez_0006</name>
</gene>
<protein>
    <recommendedName>
        <fullName evidence="1">Peptidyl-tRNA hydrolase</fullName>
        <shortName evidence="1">Pth</shortName>
        <ecNumber evidence="1">3.1.1.29</ecNumber>
    </recommendedName>
</protein>
<proteinExistence type="inferred from homology"/>
<organism>
    <name type="scientific">Streptococcus equi subsp. zooepidemicus (strain MGCS10565)</name>
    <dbReference type="NCBI Taxonomy" id="552526"/>
    <lineage>
        <taxon>Bacteria</taxon>
        <taxon>Bacillati</taxon>
        <taxon>Bacillota</taxon>
        <taxon>Bacilli</taxon>
        <taxon>Lactobacillales</taxon>
        <taxon>Streptococcaceae</taxon>
        <taxon>Streptococcus</taxon>
    </lineage>
</organism>
<dbReference type="EC" id="3.1.1.29" evidence="1"/>
<dbReference type="EMBL" id="CP001129">
    <property type="protein sequence ID" value="ACG61393.1"/>
    <property type="molecule type" value="Genomic_DNA"/>
</dbReference>
<dbReference type="RefSeq" id="WP_012514686.1">
    <property type="nucleotide sequence ID" value="NC_011134.1"/>
</dbReference>
<dbReference type="SMR" id="B4U5H3"/>
<dbReference type="KEGG" id="sez:Sez_0006"/>
<dbReference type="HOGENOM" id="CLU_062456_4_1_9"/>
<dbReference type="Proteomes" id="UP000001873">
    <property type="component" value="Chromosome"/>
</dbReference>
<dbReference type="GO" id="GO:0005737">
    <property type="term" value="C:cytoplasm"/>
    <property type="evidence" value="ECO:0007669"/>
    <property type="project" value="UniProtKB-SubCell"/>
</dbReference>
<dbReference type="GO" id="GO:0004045">
    <property type="term" value="F:peptidyl-tRNA hydrolase activity"/>
    <property type="evidence" value="ECO:0007669"/>
    <property type="project" value="UniProtKB-UniRule"/>
</dbReference>
<dbReference type="GO" id="GO:0000049">
    <property type="term" value="F:tRNA binding"/>
    <property type="evidence" value="ECO:0007669"/>
    <property type="project" value="UniProtKB-UniRule"/>
</dbReference>
<dbReference type="GO" id="GO:0006515">
    <property type="term" value="P:protein quality control for misfolded or incompletely synthesized proteins"/>
    <property type="evidence" value="ECO:0007669"/>
    <property type="project" value="UniProtKB-UniRule"/>
</dbReference>
<dbReference type="GO" id="GO:0072344">
    <property type="term" value="P:rescue of stalled ribosome"/>
    <property type="evidence" value="ECO:0007669"/>
    <property type="project" value="UniProtKB-UniRule"/>
</dbReference>
<dbReference type="CDD" id="cd00462">
    <property type="entry name" value="PTH"/>
    <property type="match status" value="1"/>
</dbReference>
<dbReference type="FunFam" id="3.40.50.1470:FF:000001">
    <property type="entry name" value="Peptidyl-tRNA hydrolase"/>
    <property type="match status" value="1"/>
</dbReference>
<dbReference type="Gene3D" id="3.40.50.1470">
    <property type="entry name" value="Peptidyl-tRNA hydrolase"/>
    <property type="match status" value="1"/>
</dbReference>
<dbReference type="HAMAP" id="MF_00083">
    <property type="entry name" value="Pept_tRNA_hydro_bact"/>
    <property type="match status" value="1"/>
</dbReference>
<dbReference type="InterPro" id="IPR001328">
    <property type="entry name" value="Pept_tRNA_hydro"/>
</dbReference>
<dbReference type="InterPro" id="IPR018171">
    <property type="entry name" value="Pept_tRNA_hydro_CS"/>
</dbReference>
<dbReference type="InterPro" id="IPR036416">
    <property type="entry name" value="Pept_tRNA_hydro_sf"/>
</dbReference>
<dbReference type="NCBIfam" id="TIGR00447">
    <property type="entry name" value="pth"/>
    <property type="match status" value="1"/>
</dbReference>
<dbReference type="PANTHER" id="PTHR17224">
    <property type="entry name" value="PEPTIDYL-TRNA HYDROLASE"/>
    <property type="match status" value="1"/>
</dbReference>
<dbReference type="PANTHER" id="PTHR17224:SF1">
    <property type="entry name" value="PEPTIDYL-TRNA HYDROLASE"/>
    <property type="match status" value="1"/>
</dbReference>
<dbReference type="Pfam" id="PF01195">
    <property type="entry name" value="Pept_tRNA_hydro"/>
    <property type="match status" value="1"/>
</dbReference>
<dbReference type="SUPFAM" id="SSF53178">
    <property type="entry name" value="Peptidyl-tRNA hydrolase-like"/>
    <property type="match status" value="1"/>
</dbReference>
<dbReference type="PROSITE" id="PS01195">
    <property type="entry name" value="PEPT_TRNA_HYDROL_1"/>
    <property type="match status" value="1"/>
</dbReference>
<dbReference type="PROSITE" id="PS01196">
    <property type="entry name" value="PEPT_TRNA_HYDROL_2"/>
    <property type="match status" value="1"/>
</dbReference>
<sequence length="189" mass="21066">MVKMIVGLGNPGSKYQQTKHNVGFMAVDRLVKDLDISFTEDKAFKALVGSAFINQEKIYFVKPTTFMNNSGLAVRALLTYYNISTKDLMVIYDDLDMAVGKIRLRQKGSAGGHNGIKSIIAHIGTQEFDRVKIGIGRPSHGMSVINHVLGKFDTDDMITINIALDKVDKAINYYLQEKSIEKTMQQFNG</sequence>
<name>PTH_STREM</name>
<reference key="1">
    <citation type="journal article" date="2008" name="PLoS ONE">
        <title>Genome sequence of a lancefield group C Streptococcus zooepidemicus strain causing epidemic nephritis: new information about an old disease.</title>
        <authorList>
            <person name="Beres S.B."/>
            <person name="Sesso R."/>
            <person name="Pinto S.W.L."/>
            <person name="Hoe N.P."/>
            <person name="Porcella S.F."/>
            <person name="Deleo F.R."/>
            <person name="Musser J.M."/>
        </authorList>
    </citation>
    <scope>NUCLEOTIDE SEQUENCE [LARGE SCALE GENOMIC DNA]</scope>
    <source>
        <strain>MGCS10565</strain>
    </source>
</reference>
<feature type="chain" id="PRO_1000092988" description="Peptidyl-tRNA hydrolase">
    <location>
        <begin position="1"/>
        <end position="189"/>
    </location>
</feature>
<feature type="active site" description="Proton acceptor" evidence="1">
    <location>
        <position position="20"/>
    </location>
</feature>
<feature type="binding site" evidence="1">
    <location>
        <position position="15"/>
    </location>
    <ligand>
        <name>tRNA</name>
        <dbReference type="ChEBI" id="CHEBI:17843"/>
    </ligand>
</feature>
<feature type="binding site" evidence="1">
    <location>
        <position position="66"/>
    </location>
    <ligand>
        <name>tRNA</name>
        <dbReference type="ChEBI" id="CHEBI:17843"/>
    </ligand>
</feature>
<feature type="binding site" evidence="1">
    <location>
        <position position="68"/>
    </location>
    <ligand>
        <name>tRNA</name>
        <dbReference type="ChEBI" id="CHEBI:17843"/>
    </ligand>
</feature>
<feature type="binding site" evidence="1">
    <location>
        <position position="114"/>
    </location>
    <ligand>
        <name>tRNA</name>
        <dbReference type="ChEBI" id="CHEBI:17843"/>
    </ligand>
</feature>
<feature type="site" description="Discriminates between blocked and unblocked aminoacyl-tRNA" evidence="1">
    <location>
        <position position="10"/>
    </location>
</feature>
<feature type="site" description="Stabilizes the basic form of H active site to accept a proton" evidence="1">
    <location>
        <position position="93"/>
    </location>
</feature>
<comment type="function">
    <text evidence="1">Hydrolyzes ribosome-free peptidyl-tRNAs (with 1 or more amino acids incorporated), which drop off the ribosome during protein synthesis, or as a result of ribosome stalling.</text>
</comment>
<comment type="function">
    <text evidence="1">Catalyzes the release of premature peptidyl moieties from peptidyl-tRNA molecules trapped in stalled 50S ribosomal subunits, and thus maintains levels of free tRNAs and 50S ribosomes.</text>
</comment>
<comment type="catalytic activity">
    <reaction evidence="1">
        <text>an N-acyl-L-alpha-aminoacyl-tRNA + H2O = an N-acyl-L-amino acid + a tRNA + H(+)</text>
        <dbReference type="Rhea" id="RHEA:54448"/>
        <dbReference type="Rhea" id="RHEA-COMP:10123"/>
        <dbReference type="Rhea" id="RHEA-COMP:13883"/>
        <dbReference type="ChEBI" id="CHEBI:15377"/>
        <dbReference type="ChEBI" id="CHEBI:15378"/>
        <dbReference type="ChEBI" id="CHEBI:59874"/>
        <dbReference type="ChEBI" id="CHEBI:78442"/>
        <dbReference type="ChEBI" id="CHEBI:138191"/>
        <dbReference type="EC" id="3.1.1.29"/>
    </reaction>
</comment>
<comment type="subunit">
    <text evidence="1">Monomer.</text>
</comment>
<comment type="subcellular location">
    <subcellularLocation>
        <location evidence="1">Cytoplasm</location>
    </subcellularLocation>
</comment>
<comment type="similarity">
    <text evidence="1">Belongs to the PTH family.</text>
</comment>
<accession>B4U5H3</accession>